<dbReference type="EMBL" id="CP000102">
    <property type="protein sequence ID" value="ABC57304.1"/>
    <property type="molecule type" value="Genomic_DNA"/>
</dbReference>
<dbReference type="RefSeq" id="WP_011406503.1">
    <property type="nucleotide sequence ID" value="NC_007681.1"/>
</dbReference>
<dbReference type="SMR" id="Q2NFU9"/>
<dbReference type="STRING" id="339860.Msp_0916"/>
<dbReference type="KEGG" id="mst:Msp_0916"/>
<dbReference type="eggNOG" id="arCOG00114">
    <property type="taxonomic scope" value="Archaea"/>
</dbReference>
<dbReference type="HOGENOM" id="CLU_055443_0_0_2"/>
<dbReference type="OrthoDB" id="67852at2157"/>
<dbReference type="Proteomes" id="UP000001931">
    <property type="component" value="Chromosome"/>
</dbReference>
<dbReference type="GO" id="GO:0004125">
    <property type="term" value="F:L-seryl-tRNA(Sec) selenium transferase activity"/>
    <property type="evidence" value="ECO:0007669"/>
    <property type="project" value="TreeGrafter"/>
</dbReference>
<dbReference type="GO" id="GO:0030170">
    <property type="term" value="F:pyridoxal phosphate binding"/>
    <property type="evidence" value="ECO:0007669"/>
    <property type="project" value="InterPro"/>
</dbReference>
<dbReference type="GO" id="GO:0019346">
    <property type="term" value="P:transsulfuration"/>
    <property type="evidence" value="ECO:0007669"/>
    <property type="project" value="InterPro"/>
</dbReference>
<dbReference type="Gene3D" id="3.90.1150.70">
    <property type="match status" value="1"/>
</dbReference>
<dbReference type="Gene3D" id="3.40.640.10">
    <property type="entry name" value="Type I PLP-dependent aspartate aminotransferase-like (Major domain)"/>
    <property type="match status" value="1"/>
</dbReference>
<dbReference type="InterPro" id="IPR000277">
    <property type="entry name" value="Cys/Met-Metab_PyrdxlP-dep_enz"/>
</dbReference>
<dbReference type="InterPro" id="IPR020033">
    <property type="entry name" value="PyrdxlP-dep_transferase_arc"/>
</dbReference>
<dbReference type="InterPro" id="IPR015424">
    <property type="entry name" value="PyrdxlP-dep_Trfase"/>
</dbReference>
<dbReference type="InterPro" id="IPR015421">
    <property type="entry name" value="PyrdxlP-dep_Trfase_major"/>
</dbReference>
<dbReference type="InterPro" id="IPR055177">
    <property type="entry name" value="UPF0425_MJ0158-like_C"/>
</dbReference>
<dbReference type="NCBIfam" id="TIGR03576">
    <property type="entry name" value="pyridox_MJ0158"/>
    <property type="match status" value="1"/>
</dbReference>
<dbReference type="PANTHER" id="PTHR32328">
    <property type="entry name" value="L-SERYL-TRNA(SEC) SELENIUM TRANSFERASE"/>
    <property type="match status" value="1"/>
</dbReference>
<dbReference type="PANTHER" id="PTHR32328:SF0">
    <property type="entry name" value="L-SERYL-TRNA(SEC) SELENIUM TRANSFERASE"/>
    <property type="match status" value="1"/>
</dbReference>
<dbReference type="Pfam" id="PF01053">
    <property type="entry name" value="Cys_Met_Meta_PP"/>
    <property type="match status" value="1"/>
</dbReference>
<dbReference type="Pfam" id="PF22583">
    <property type="entry name" value="UPF0425_C"/>
    <property type="match status" value="1"/>
</dbReference>
<dbReference type="SUPFAM" id="SSF53383">
    <property type="entry name" value="PLP-dependent transferases"/>
    <property type="match status" value="1"/>
</dbReference>
<evidence type="ECO:0000250" key="1"/>
<evidence type="ECO:0000305" key="2"/>
<accession>Q2NFU9</accession>
<proteinExistence type="inferred from homology"/>
<comment type="cofactor">
    <cofactor evidence="1">
        <name>pyridoxal 5'-phosphate</name>
        <dbReference type="ChEBI" id="CHEBI:597326"/>
    </cofactor>
</comment>
<comment type="similarity">
    <text evidence="2">Belongs to the UPF0425 family.</text>
</comment>
<comment type="caution">
    <text evidence="2">Despite a certain similarity to selA, this is not selA (see AC Q57622).</text>
</comment>
<reference key="1">
    <citation type="journal article" date="2006" name="J. Bacteriol.">
        <title>The genome sequence of Methanosphaera stadtmanae reveals why this human intestinal archaeon is restricted to methanol and H2 for methane formation and ATP synthesis.</title>
        <authorList>
            <person name="Fricke W.F."/>
            <person name="Seedorf H."/>
            <person name="Henne A."/>
            <person name="Kruer M."/>
            <person name="Liesegang H."/>
            <person name="Hedderich R."/>
            <person name="Gottschalk G."/>
            <person name="Thauer R.K."/>
        </authorList>
    </citation>
    <scope>NUCLEOTIDE SEQUENCE [LARGE SCALE GENOMIC DNA]</scope>
    <source>
        <strain>ATCC 43021 / DSM 3091 / JCM 11832 / MCB-3</strain>
    </source>
</reference>
<keyword id="KW-0663">Pyridoxal phosphate</keyword>
<keyword id="KW-1185">Reference proteome</keyword>
<feature type="chain" id="PRO_0000285292" description="UPF0425 pyridoxal phosphate-dependent protein Msp_0916">
    <location>
        <begin position="1"/>
        <end position="383"/>
    </location>
</feature>
<feature type="modified residue" description="N6-(pyridoxal phosphate)lysine" evidence="1">
    <location>
        <position position="207"/>
    </location>
</feature>
<gene>
    <name type="ordered locus">Msp_0916</name>
</gene>
<protein>
    <recommendedName>
        <fullName>UPF0425 pyridoxal phosphate-dependent protein Msp_0916</fullName>
    </recommendedName>
</protein>
<organism>
    <name type="scientific">Methanosphaera stadtmanae (strain ATCC 43021 / DSM 3091 / JCM 11832 / MCB-3)</name>
    <dbReference type="NCBI Taxonomy" id="339860"/>
    <lineage>
        <taxon>Archaea</taxon>
        <taxon>Methanobacteriati</taxon>
        <taxon>Methanobacteriota</taxon>
        <taxon>Methanomada group</taxon>
        <taxon>Methanobacteria</taxon>
        <taxon>Methanobacteriales</taxon>
        <taxon>Methanobacteriaceae</taxon>
        <taxon>Methanosphaera</taxon>
    </lineage>
</organism>
<name>Y916_METST</name>
<sequence length="383" mass="42239">MSITLNEVKRREKGLKIIKDKIETDGIDSLIDLTGLAGGFDITPEDISLLETYAGPAVYEQKVQKLGIKHLGGEKILPVNRTTSGIVAMIIALVKPGTKIVHFLAKKPAHPSIPRTAKLVGADYEEYTNLDEFKIDDNTSLVFITGTTMDLEVISVEDFKRVIKQAKEKDVIVAVDDASGARIRRAVYNQPTAIDLGADISVTSTDKLMEGPRGGLMAGSTEIIDKIKLVVNQYGLEAQAPLIVGMIKGLEKYSPERIQEAFKQKDELYQKLLDKQLNPQTTPTGFMFKEEEIKAEVEKRGAKVDMDADVIATVYSMLLIDNYNIITIPAVGMPGASKTVRFDWAAKDSDKLTMDELVSAVCDTFDKTVEVCKNNDFESVLYN</sequence>